<gene>
    <name evidence="1" type="primary">acpS</name>
    <name type="ordered locus">Ccur92_08040</name>
    <name type="ORF">CCV52592_1391</name>
</gene>
<name>ACPS_CAMC5</name>
<evidence type="ECO:0000255" key="1">
    <source>
        <dbReference type="HAMAP-Rule" id="MF_00101"/>
    </source>
</evidence>
<organism>
    <name type="scientific">Campylobacter curvus (strain 525.92)</name>
    <dbReference type="NCBI Taxonomy" id="360105"/>
    <lineage>
        <taxon>Bacteria</taxon>
        <taxon>Pseudomonadati</taxon>
        <taxon>Campylobacterota</taxon>
        <taxon>Epsilonproteobacteria</taxon>
        <taxon>Campylobacterales</taxon>
        <taxon>Campylobacteraceae</taxon>
        <taxon>Campylobacter</taxon>
    </lineage>
</organism>
<protein>
    <recommendedName>
        <fullName evidence="1">Holo-[acyl-carrier-protein] synthase</fullName>
        <shortName evidence="1">Holo-ACP synthase</shortName>
        <ecNumber evidence="1">2.7.8.7</ecNumber>
    </recommendedName>
    <alternativeName>
        <fullName evidence="1">4'-phosphopantetheinyl transferase AcpS</fullName>
    </alternativeName>
</protein>
<feature type="chain" id="PRO_1000008406" description="Holo-[acyl-carrier-protein] synthase">
    <location>
        <begin position="1"/>
        <end position="114"/>
    </location>
</feature>
<feature type="binding site" evidence="1">
    <location>
        <position position="5"/>
    </location>
    <ligand>
        <name>Mg(2+)</name>
        <dbReference type="ChEBI" id="CHEBI:18420"/>
    </ligand>
</feature>
<feature type="binding site" evidence="1">
    <location>
        <position position="50"/>
    </location>
    <ligand>
        <name>Mg(2+)</name>
        <dbReference type="ChEBI" id="CHEBI:18420"/>
    </ligand>
</feature>
<proteinExistence type="inferred from homology"/>
<sequence>MIGIDIVSIGRISRLKERHGELFLRRFLSEDELALAKSDASIAGLWAAKEAASKALGVGIGAECSFFDIIIEKSPKNAPILKFSPKIYENFNIKEATLSISHDAGFAIAVAIVS</sequence>
<reference key="1">
    <citation type="submission" date="2007-07" db="EMBL/GenBank/DDBJ databases">
        <title>Genome sequence of Campylobacter curvus 525.92 isolated from human feces.</title>
        <authorList>
            <person name="Fouts D.E."/>
            <person name="Mongodin E.F."/>
            <person name="Puiu D."/>
            <person name="Sebastian Y."/>
            <person name="Miller W.G."/>
            <person name="Mandrell R.E."/>
            <person name="Lastovica A.J."/>
            <person name="Nelson K.E."/>
        </authorList>
    </citation>
    <scope>NUCLEOTIDE SEQUENCE [LARGE SCALE GENOMIC DNA]</scope>
    <source>
        <strain>525.92</strain>
    </source>
</reference>
<keyword id="KW-0963">Cytoplasm</keyword>
<keyword id="KW-0275">Fatty acid biosynthesis</keyword>
<keyword id="KW-0276">Fatty acid metabolism</keyword>
<keyword id="KW-0444">Lipid biosynthesis</keyword>
<keyword id="KW-0443">Lipid metabolism</keyword>
<keyword id="KW-0460">Magnesium</keyword>
<keyword id="KW-0479">Metal-binding</keyword>
<keyword id="KW-1185">Reference proteome</keyword>
<keyword id="KW-0808">Transferase</keyword>
<dbReference type="EC" id="2.7.8.7" evidence="1"/>
<dbReference type="EMBL" id="CP000767">
    <property type="protein sequence ID" value="EAU00450.1"/>
    <property type="molecule type" value="Genomic_DNA"/>
</dbReference>
<dbReference type="RefSeq" id="WP_009651511.1">
    <property type="nucleotide sequence ID" value="NC_009715.2"/>
</dbReference>
<dbReference type="SMR" id="A7GY16"/>
<dbReference type="STRING" id="360105.CCV52592_1391"/>
<dbReference type="KEGG" id="ccv:CCV52592_1391"/>
<dbReference type="HOGENOM" id="CLU_089696_0_2_7"/>
<dbReference type="OrthoDB" id="517356at2"/>
<dbReference type="Proteomes" id="UP000006380">
    <property type="component" value="Chromosome"/>
</dbReference>
<dbReference type="GO" id="GO:0005737">
    <property type="term" value="C:cytoplasm"/>
    <property type="evidence" value="ECO:0007669"/>
    <property type="project" value="UniProtKB-SubCell"/>
</dbReference>
<dbReference type="GO" id="GO:0008897">
    <property type="term" value="F:holo-[acyl-carrier-protein] synthase activity"/>
    <property type="evidence" value="ECO:0007669"/>
    <property type="project" value="UniProtKB-UniRule"/>
</dbReference>
<dbReference type="GO" id="GO:0000287">
    <property type="term" value="F:magnesium ion binding"/>
    <property type="evidence" value="ECO:0007669"/>
    <property type="project" value="UniProtKB-UniRule"/>
</dbReference>
<dbReference type="GO" id="GO:0006633">
    <property type="term" value="P:fatty acid biosynthetic process"/>
    <property type="evidence" value="ECO:0007669"/>
    <property type="project" value="UniProtKB-UniRule"/>
</dbReference>
<dbReference type="Gene3D" id="3.90.470.20">
    <property type="entry name" value="4'-phosphopantetheinyl transferase domain"/>
    <property type="match status" value="1"/>
</dbReference>
<dbReference type="HAMAP" id="MF_00101">
    <property type="entry name" value="AcpS"/>
    <property type="match status" value="1"/>
</dbReference>
<dbReference type="InterPro" id="IPR008278">
    <property type="entry name" value="4-PPantetheinyl_Trfase_dom"/>
</dbReference>
<dbReference type="InterPro" id="IPR037143">
    <property type="entry name" value="4-PPantetheinyl_Trfase_dom_sf"/>
</dbReference>
<dbReference type="InterPro" id="IPR002582">
    <property type="entry name" value="ACPS"/>
</dbReference>
<dbReference type="InterPro" id="IPR004568">
    <property type="entry name" value="Ppantetheine-prot_Trfase_dom"/>
</dbReference>
<dbReference type="NCBIfam" id="TIGR00516">
    <property type="entry name" value="acpS"/>
    <property type="match status" value="1"/>
</dbReference>
<dbReference type="NCBIfam" id="TIGR00556">
    <property type="entry name" value="pantethn_trn"/>
    <property type="match status" value="1"/>
</dbReference>
<dbReference type="Pfam" id="PF01648">
    <property type="entry name" value="ACPS"/>
    <property type="match status" value="1"/>
</dbReference>
<dbReference type="SUPFAM" id="SSF56214">
    <property type="entry name" value="4'-phosphopantetheinyl transferase"/>
    <property type="match status" value="1"/>
</dbReference>
<accession>A7GY16</accession>
<comment type="function">
    <text evidence="1">Transfers the 4'-phosphopantetheine moiety from coenzyme A to a Ser of acyl-carrier-protein.</text>
</comment>
<comment type="catalytic activity">
    <reaction evidence="1">
        <text>apo-[ACP] + CoA = holo-[ACP] + adenosine 3',5'-bisphosphate + H(+)</text>
        <dbReference type="Rhea" id="RHEA:12068"/>
        <dbReference type="Rhea" id="RHEA-COMP:9685"/>
        <dbReference type="Rhea" id="RHEA-COMP:9690"/>
        <dbReference type="ChEBI" id="CHEBI:15378"/>
        <dbReference type="ChEBI" id="CHEBI:29999"/>
        <dbReference type="ChEBI" id="CHEBI:57287"/>
        <dbReference type="ChEBI" id="CHEBI:58343"/>
        <dbReference type="ChEBI" id="CHEBI:64479"/>
        <dbReference type="EC" id="2.7.8.7"/>
    </reaction>
</comment>
<comment type="cofactor">
    <cofactor evidence="1">
        <name>Mg(2+)</name>
        <dbReference type="ChEBI" id="CHEBI:18420"/>
    </cofactor>
</comment>
<comment type="subcellular location">
    <subcellularLocation>
        <location evidence="1">Cytoplasm</location>
    </subcellularLocation>
</comment>
<comment type="similarity">
    <text evidence="1">Belongs to the P-Pant transferase superfamily. AcpS family.</text>
</comment>